<evidence type="ECO:0000250" key="1"/>
<evidence type="ECO:0000305" key="2"/>
<keyword id="KW-0028">Amino-acid biosynthesis</keyword>
<keyword id="KW-0963">Cytoplasm</keyword>
<keyword id="KW-0368">Histidine biosynthesis</keyword>
<keyword id="KW-1185">Reference proteome</keyword>
<comment type="function">
    <text evidence="1">Required for the first step of histidine biosynthesis. May allow the feedback regulation of ATP phosphoribosyltransferase activity by histidine (By similarity).</text>
</comment>
<comment type="pathway">
    <text>Amino-acid biosynthesis; L-histidine biosynthesis; L-histidine from 5-phospho-alpha-D-ribose 1-diphosphate: step 1/9.</text>
</comment>
<comment type="subunit">
    <text evidence="1">Heteromultimer composed of HisG and HisZ subunits.</text>
</comment>
<comment type="subcellular location">
    <subcellularLocation>
        <location evidence="1">Cytoplasm</location>
    </subcellularLocation>
</comment>
<comment type="miscellaneous">
    <text>This function is generally fulfilled by the C-terminal part of HisG, which is missing in some bacteria such as this one.</text>
</comment>
<comment type="similarity">
    <text evidence="2">Belongs to the class-II aminoacyl-tRNA synthetase family. HisZ subfamily.</text>
</comment>
<protein>
    <recommendedName>
        <fullName>ATP phosphoribosyltransferase regulatory subunit</fullName>
    </recommendedName>
</protein>
<proteinExistence type="inferred from homology"/>
<sequence length="286" mass="33120">MVVILEHEIPQGSQLYFGKSARLKRRIEERASQILYTAGFEEIITPSFSFLEHQRDTSSREVLRLSNEKNHQIALRNDTTLDVVRIITKRLGRSTEHRRWFYIQPVFSYPTNEIHQIGAESLGEADAKSMLKVAIEIFRSLELEPILQLSNMRIPLLCAEHSRLGLEVFAKMQVEKIMASEEYLGELLQIKNAQDLQRVTSKVPSFLKEELEKLRALAEGIEYPRFVFAPLYYAPMDYYNGIFFRMFEGNSTLLSGGIYEMDELQSCGFGLYTDQLIEKILRHNEG</sequence>
<name>HISZ_WOLSU</name>
<dbReference type="EMBL" id="BX571662">
    <property type="protein sequence ID" value="CAE11057.1"/>
    <property type="molecule type" value="Genomic_DNA"/>
</dbReference>
<dbReference type="RefSeq" id="WP_011139839.1">
    <property type="nucleotide sequence ID" value="NC_005090.1"/>
</dbReference>
<dbReference type="SMR" id="Q7MQS0"/>
<dbReference type="STRING" id="273121.WS2057"/>
<dbReference type="KEGG" id="wsu:WS2057"/>
<dbReference type="eggNOG" id="COG3705">
    <property type="taxonomic scope" value="Bacteria"/>
</dbReference>
<dbReference type="HOGENOM" id="CLU_939330_0_0_7"/>
<dbReference type="UniPathway" id="UPA00031">
    <property type="reaction ID" value="UER00006"/>
</dbReference>
<dbReference type="Proteomes" id="UP000000422">
    <property type="component" value="Chromosome"/>
</dbReference>
<dbReference type="GO" id="GO:0005737">
    <property type="term" value="C:cytoplasm"/>
    <property type="evidence" value="ECO:0007669"/>
    <property type="project" value="UniProtKB-SubCell"/>
</dbReference>
<dbReference type="GO" id="GO:0004821">
    <property type="term" value="F:histidine-tRNA ligase activity"/>
    <property type="evidence" value="ECO:0007669"/>
    <property type="project" value="TreeGrafter"/>
</dbReference>
<dbReference type="GO" id="GO:0006427">
    <property type="term" value="P:histidyl-tRNA aminoacylation"/>
    <property type="evidence" value="ECO:0007669"/>
    <property type="project" value="TreeGrafter"/>
</dbReference>
<dbReference type="GO" id="GO:0000105">
    <property type="term" value="P:L-histidine biosynthetic process"/>
    <property type="evidence" value="ECO:0007669"/>
    <property type="project" value="UniProtKB-UniPathway"/>
</dbReference>
<dbReference type="Gene3D" id="3.30.930.10">
    <property type="entry name" value="Bira Bifunctional Protein, Domain 2"/>
    <property type="match status" value="1"/>
</dbReference>
<dbReference type="InterPro" id="IPR045864">
    <property type="entry name" value="aa-tRNA-synth_II/BPL/LPL"/>
</dbReference>
<dbReference type="InterPro" id="IPR041715">
    <property type="entry name" value="HisRS-like_core"/>
</dbReference>
<dbReference type="InterPro" id="IPR004516">
    <property type="entry name" value="HisRS/HisZ"/>
</dbReference>
<dbReference type="NCBIfam" id="NF008946">
    <property type="entry name" value="PRK12293.1"/>
    <property type="match status" value="1"/>
</dbReference>
<dbReference type="PANTHER" id="PTHR43707:SF1">
    <property type="entry name" value="HISTIDINE--TRNA LIGASE, MITOCHONDRIAL-RELATED"/>
    <property type="match status" value="1"/>
</dbReference>
<dbReference type="PANTHER" id="PTHR43707">
    <property type="entry name" value="HISTIDYL-TRNA SYNTHETASE"/>
    <property type="match status" value="1"/>
</dbReference>
<dbReference type="Pfam" id="PF13393">
    <property type="entry name" value="tRNA-synt_His"/>
    <property type="match status" value="1"/>
</dbReference>
<dbReference type="SUPFAM" id="SSF55681">
    <property type="entry name" value="Class II aaRS and biotin synthetases"/>
    <property type="match status" value="1"/>
</dbReference>
<organism>
    <name type="scientific">Wolinella succinogenes (strain ATCC 29543 / DSM 1740 / CCUG 13145 / JCM 31913 / LMG 7466 / NCTC 11488 / FDC 602W)</name>
    <name type="common">Vibrio succinogenes</name>
    <dbReference type="NCBI Taxonomy" id="273121"/>
    <lineage>
        <taxon>Bacteria</taxon>
        <taxon>Pseudomonadati</taxon>
        <taxon>Campylobacterota</taxon>
        <taxon>Epsilonproteobacteria</taxon>
        <taxon>Campylobacterales</taxon>
        <taxon>Helicobacteraceae</taxon>
        <taxon>Wolinella</taxon>
    </lineage>
</organism>
<gene>
    <name type="primary">hisZ</name>
    <name type="ordered locus">WS2057</name>
</gene>
<reference key="1">
    <citation type="journal article" date="2003" name="Proc. Natl. Acad. Sci. U.S.A.">
        <title>Complete genome sequence and analysis of Wolinella succinogenes.</title>
        <authorList>
            <person name="Baar C."/>
            <person name="Eppinger M."/>
            <person name="Raddatz G."/>
            <person name="Simon J."/>
            <person name="Lanz C."/>
            <person name="Klimmek O."/>
            <person name="Nandakumar R."/>
            <person name="Gross R."/>
            <person name="Rosinus A."/>
            <person name="Keller H."/>
            <person name="Jagtap P."/>
            <person name="Linke B."/>
            <person name="Meyer F."/>
            <person name="Lederer H."/>
            <person name="Schuster S.C."/>
        </authorList>
    </citation>
    <scope>NUCLEOTIDE SEQUENCE [LARGE SCALE GENOMIC DNA]</scope>
    <source>
        <strain>ATCC 29543 / DSM 1740 / CCUG 13145 / JCM 31913 / LMG 7466 / NCTC 11488 / FDC 602W</strain>
    </source>
</reference>
<feature type="chain" id="PRO_0000171075" description="ATP phosphoribosyltransferase regulatory subunit">
    <location>
        <begin position="1"/>
        <end position="286"/>
    </location>
</feature>
<accession>Q7MQS0</accession>